<name>BIOD_BURP0</name>
<feature type="chain" id="PRO_0000302491" description="ATP-dependent dethiobiotin synthetase BioD">
    <location>
        <begin position="1"/>
        <end position="240"/>
    </location>
</feature>
<feature type="active site" evidence="1">
    <location>
        <position position="40"/>
    </location>
</feature>
<feature type="binding site" evidence="1">
    <location>
        <begin position="15"/>
        <end position="20"/>
    </location>
    <ligand>
        <name>ATP</name>
        <dbReference type="ChEBI" id="CHEBI:30616"/>
    </ligand>
</feature>
<feature type="binding site" evidence="1">
    <location>
        <position position="19"/>
    </location>
    <ligand>
        <name>Mg(2+)</name>
        <dbReference type="ChEBI" id="CHEBI:18420"/>
    </ligand>
</feature>
<feature type="binding site" evidence="1">
    <location>
        <position position="57"/>
    </location>
    <ligand>
        <name>ATP</name>
        <dbReference type="ChEBI" id="CHEBI:30616"/>
    </ligand>
</feature>
<feature type="binding site" evidence="1">
    <location>
        <position position="57"/>
    </location>
    <ligand>
        <name>Mg(2+)</name>
        <dbReference type="ChEBI" id="CHEBI:18420"/>
    </ligand>
</feature>
<feature type="binding site" evidence="1">
    <location>
        <begin position="118"/>
        <end position="121"/>
    </location>
    <ligand>
        <name>ATP</name>
        <dbReference type="ChEBI" id="CHEBI:30616"/>
    </ligand>
</feature>
<feature type="binding site" evidence="1">
    <location>
        <position position="118"/>
    </location>
    <ligand>
        <name>Mg(2+)</name>
        <dbReference type="ChEBI" id="CHEBI:18420"/>
    </ligand>
</feature>
<feature type="binding site" evidence="1">
    <location>
        <begin position="178"/>
        <end position="179"/>
    </location>
    <ligand>
        <name>ATP</name>
        <dbReference type="ChEBI" id="CHEBI:30616"/>
    </ligand>
</feature>
<evidence type="ECO:0000255" key="1">
    <source>
        <dbReference type="HAMAP-Rule" id="MF_00336"/>
    </source>
</evidence>
<reference key="1">
    <citation type="journal article" date="2010" name="Genome Biol. Evol.">
        <title>Continuing evolution of Burkholderia mallei through genome reduction and large-scale rearrangements.</title>
        <authorList>
            <person name="Losada L."/>
            <person name="Ronning C.M."/>
            <person name="DeShazer D."/>
            <person name="Woods D."/>
            <person name="Fedorova N."/>
            <person name="Kim H.S."/>
            <person name="Shabalina S.A."/>
            <person name="Pearson T.R."/>
            <person name="Brinkac L."/>
            <person name="Tan P."/>
            <person name="Nandi T."/>
            <person name="Crabtree J."/>
            <person name="Badger J."/>
            <person name="Beckstrom-Sternberg S."/>
            <person name="Saqib M."/>
            <person name="Schutzer S.E."/>
            <person name="Keim P."/>
            <person name="Nierman W.C."/>
        </authorList>
    </citation>
    <scope>NUCLEOTIDE SEQUENCE [LARGE SCALE GENOMIC DNA]</scope>
    <source>
        <strain>1106a</strain>
    </source>
</reference>
<gene>
    <name evidence="1" type="primary">bioD</name>
    <name type="ordered locus">BURPS1106A_0410</name>
</gene>
<dbReference type="EC" id="6.3.3.3" evidence="1"/>
<dbReference type="EMBL" id="CP000572">
    <property type="protein sequence ID" value="ABN89300.1"/>
    <property type="molecule type" value="Genomic_DNA"/>
</dbReference>
<dbReference type="RefSeq" id="WP_004525971.1">
    <property type="nucleotide sequence ID" value="NC_009076.1"/>
</dbReference>
<dbReference type="SMR" id="A3NQS2"/>
<dbReference type="KEGG" id="bpl:BURPS1106A_0410"/>
<dbReference type="HOGENOM" id="CLU_072551_0_0_4"/>
<dbReference type="UniPathway" id="UPA00078">
    <property type="reaction ID" value="UER00161"/>
</dbReference>
<dbReference type="Proteomes" id="UP000006738">
    <property type="component" value="Chromosome I"/>
</dbReference>
<dbReference type="GO" id="GO:0005829">
    <property type="term" value="C:cytosol"/>
    <property type="evidence" value="ECO:0007669"/>
    <property type="project" value="TreeGrafter"/>
</dbReference>
<dbReference type="GO" id="GO:0005524">
    <property type="term" value="F:ATP binding"/>
    <property type="evidence" value="ECO:0007669"/>
    <property type="project" value="UniProtKB-UniRule"/>
</dbReference>
<dbReference type="GO" id="GO:0004141">
    <property type="term" value="F:dethiobiotin synthase activity"/>
    <property type="evidence" value="ECO:0007669"/>
    <property type="project" value="UniProtKB-UniRule"/>
</dbReference>
<dbReference type="GO" id="GO:0000287">
    <property type="term" value="F:magnesium ion binding"/>
    <property type="evidence" value="ECO:0007669"/>
    <property type="project" value="UniProtKB-UniRule"/>
</dbReference>
<dbReference type="GO" id="GO:0009102">
    <property type="term" value="P:biotin biosynthetic process"/>
    <property type="evidence" value="ECO:0007669"/>
    <property type="project" value="UniProtKB-UniRule"/>
</dbReference>
<dbReference type="CDD" id="cd03109">
    <property type="entry name" value="DTBS"/>
    <property type="match status" value="1"/>
</dbReference>
<dbReference type="FunFam" id="3.40.50.300:FF:000292">
    <property type="entry name" value="ATP-dependent dethiobiotin synthetase BioD"/>
    <property type="match status" value="1"/>
</dbReference>
<dbReference type="Gene3D" id="3.40.50.300">
    <property type="entry name" value="P-loop containing nucleotide triphosphate hydrolases"/>
    <property type="match status" value="1"/>
</dbReference>
<dbReference type="HAMAP" id="MF_00336">
    <property type="entry name" value="BioD"/>
    <property type="match status" value="1"/>
</dbReference>
<dbReference type="InterPro" id="IPR004472">
    <property type="entry name" value="DTB_synth_BioD"/>
</dbReference>
<dbReference type="InterPro" id="IPR027417">
    <property type="entry name" value="P-loop_NTPase"/>
</dbReference>
<dbReference type="NCBIfam" id="TIGR00347">
    <property type="entry name" value="bioD"/>
    <property type="match status" value="1"/>
</dbReference>
<dbReference type="PANTHER" id="PTHR43210">
    <property type="entry name" value="DETHIOBIOTIN SYNTHETASE"/>
    <property type="match status" value="1"/>
</dbReference>
<dbReference type="PANTHER" id="PTHR43210:SF5">
    <property type="entry name" value="DETHIOBIOTIN SYNTHETASE"/>
    <property type="match status" value="1"/>
</dbReference>
<dbReference type="Pfam" id="PF13500">
    <property type="entry name" value="AAA_26"/>
    <property type="match status" value="1"/>
</dbReference>
<dbReference type="PIRSF" id="PIRSF006755">
    <property type="entry name" value="DTB_synth"/>
    <property type="match status" value="1"/>
</dbReference>
<dbReference type="SUPFAM" id="SSF52540">
    <property type="entry name" value="P-loop containing nucleoside triphosphate hydrolases"/>
    <property type="match status" value="1"/>
</dbReference>
<keyword id="KW-0067">ATP-binding</keyword>
<keyword id="KW-0093">Biotin biosynthesis</keyword>
<keyword id="KW-0963">Cytoplasm</keyword>
<keyword id="KW-0436">Ligase</keyword>
<keyword id="KW-0460">Magnesium</keyword>
<keyword id="KW-0479">Metal-binding</keyword>
<keyword id="KW-0547">Nucleotide-binding</keyword>
<protein>
    <recommendedName>
        <fullName evidence="1">ATP-dependent dethiobiotin synthetase BioD</fullName>
        <ecNumber evidence="1">6.3.3.3</ecNumber>
    </recommendedName>
    <alternativeName>
        <fullName evidence="1">DTB synthetase</fullName>
        <shortName evidence="1">DTBS</shortName>
    </alternativeName>
    <alternativeName>
        <fullName evidence="1">Dethiobiotin synthase</fullName>
    </alternativeName>
</protein>
<proteinExistence type="inferred from homology"/>
<accession>A3NQS2</accession>
<organism>
    <name type="scientific">Burkholderia pseudomallei (strain 1106a)</name>
    <dbReference type="NCBI Taxonomy" id="357348"/>
    <lineage>
        <taxon>Bacteria</taxon>
        <taxon>Pseudomonadati</taxon>
        <taxon>Pseudomonadota</taxon>
        <taxon>Betaproteobacteria</taxon>
        <taxon>Burkholderiales</taxon>
        <taxon>Burkholderiaceae</taxon>
        <taxon>Burkholderia</taxon>
        <taxon>pseudomallei group</taxon>
    </lineage>
</organism>
<sequence>MSAPLSLFVTGTDTEIGKTFVSAALLHGFARAGLRAAAMKPVAAGAYERDGAWRNEDADQLDAAANVALPAAIRTPFLLKAPAAPHIVAAREGVALDIGTIVDAHRRACEMADVIVVEGVGGFRVPLADTRDTADLAVALGLPVVLVVGVRLGCISHALLTAEAIAARGLPLAGWVANRIDPAMPFADDNVDTLRAWLEREHRAPLLGALAHMSPPSPDAASHALDVNLLLNALRAAAPR</sequence>
<comment type="function">
    <text evidence="1">Catalyzes a mechanistically unusual reaction, the ATP-dependent insertion of CO2 between the N7 and N8 nitrogen atoms of 7,8-diaminopelargonic acid (DAPA, also called 7,8-diammoniononanoate) to form a ureido ring.</text>
</comment>
<comment type="catalytic activity">
    <reaction evidence="1">
        <text>(7R,8S)-7,8-diammoniononanoate + CO2 + ATP = (4R,5S)-dethiobiotin + ADP + phosphate + 3 H(+)</text>
        <dbReference type="Rhea" id="RHEA:15805"/>
        <dbReference type="ChEBI" id="CHEBI:15378"/>
        <dbReference type="ChEBI" id="CHEBI:16526"/>
        <dbReference type="ChEBI" id="CHEBI:30616"/>
        <dbReference type="ChEBI" id="CHEBI:43474"/>
        <dbReference type="ChEBI" id="CHEBI:149469"/>
        <dbReference type="ChEBI" id="CHEBI:149473"/>
        <dbReference type="ChEBI" id="CHEBI:456216"/>
        <dbReference type="EC" id="6.3.3.3"/>
    </reaction>
</comment>
<comment type="cofactor">
    <cofactor evidence="1">
        <name>Mg(2+)</name>
        <dbReference type="ChEBI" id="CHEBI:18420"/>
    </cofactor>
</comment>
<comment type="pathway">
    <text evidence="1">Cofactor biosynthesis; biotin biosynthesis; biotin from 7,8-diaminononanoate: step 1/2.</text>
</comment>
<comment type="subunit">
    <text evidence="1">Homodimer.</text>
</comment>
<comment type="subcellular location">
    <subcellularLocation>
        <location evidence="1">Cytoplasm</location>
    </subcellularLocation>
</comment>
<comment type="similarity">
    <text evidence="1">Belongs to the dethiobiotin synthetase family.</text>
</comment>